<organism>
    <name type="scientific">Invertebrate iridescent virus 6</name>
    <name type="common">IIV-6</name>
    <name type="synonym">Chilo iridescent virus</name>
    <dbReference type="NCBI Taxonomy" id="176652"/>
    <lineage>
        <taxon>Viruses</taxon>
        <taxon>Varidnaviria</taxon>
        <taxon>Bamfordvirae</taxon>
        <taxon>Nucleocytoviricota</taxon>
        <taxon>Megaviricetes</taxon>
        <taxon>Pimascovirales</taxon>
        <taxon>Iridoviridae</taxon>
        <taxon>Betairidovirinae</taxon>
        <taxon>Iridovirus</taxon>
    </lineage>
</organism>
<reference key="1">
    <citation type="journal article" date="2001" name="Virology">
        <title>Analysis of the first complete DNA sequence of an invertebrate iridovirus: coding strategy of the genome of Chilo iridescent virus.</title>
        <authorList>
            <person name="Jakob N.J."/>
            <person name="Mueller K."/>
            <person name="Bahr U."/>
            <person name="Darai G."/>
        </authorList>
    </citation>
    <scope>NUCLEOTIDE SEQUENCE [LARGE SCALE GENOMIC DNA]</scope>
</reference>
<reference key="2">
    <citation type="journal article" date="2007" name="Virol. J.">
        <title>Comparative genomic analysis of the family Iridoviridae: re-annotating and defining the core set of iridovirus genes.</title>
        <authorList>
            <person name="Eaton H.E."/>
            <person name="Metcalf J."/>
            <person name="Penny E."/>
            <person name="Tcherepanov V."/>
            <person name="Upton C."/>
            <person name="Brunetti C.R."/>
        </authorList>
    </citation>
    <scope>GENOME REANNOTATION</scope>
</reference>
<sequence>MSLPVNFKIYNPLEALEASHGGGGGITPGSVTGGPGGSIAPGTITSFNLSPGTAASNINSGPDAAVLGSKISKADNTNFGVIEFDPTGDLVQTAAGSGVALLKPGSAANNINSGPPGSINSSQINGGPFLPLSGGTLTGNLVMGPGANITSNPPLNPTDVANKQYVDLSGQKAFAGWTLSSGAFAVSVPAGSTVNAFATTTAPIGNQVWTGADGVTITINGAGIITINNTNTFDTYYVCYFRGNGLLCSNASASPAVYFRFYDETNAANITVEQSLRLISPTIVPAVGGQPFNNYIDFSAFIKVLASSSLNISVKARNPGVDNCLLSTNVSSDVCQVMVIRQG</sequence>
<accession>Q91FV2</accession>
<protein>
    <recommendedName>
        <fullName>Uncharacterized protein 219L</fullName>
    </recommendedName>
</protein>
<keyword id="KW-1185">Reference proteome</keyword>
<dbReference type="EMBL" id="AF303741">
    <property type="protein sequence ID" value="AAK82081.1"/>
    <property type="molecule type" value="Genomic_DNA"/>
</dbReference>
<dbReference type="RefSeq" id="NP_149682.1">
    <property type="nucleotide sequence ID" value="NC_003038.1"/>
</dbReference>
<dbReference type="KEGG" id="vg:1733229"/>
<dbReference type="OrthoDB" id="36038at10239"/>
<dbReference type="Proteomes" id="UP000001359">
    <property type="component" value="Genome"/>
</dbReference>
<organismHost>
    <name type="scientific">Acheta domesticus</name>
    <name type="common">House cricket</name>
    <dbReference type="NCBI Taxonomy" id="6997"/>
</organismHost>
<organismHost>
    <name type="scientific">Chilo suppressalis</name>
    <name type="common">Asiatic rice borer moth</name>
    <dbReference type="NCBI Taxonomy" id="168631"/>
</organismHost>
<organismHost>
    <name type="scientific">Gryllus bimaculatus</name>
    <name type="common">Two-spotted cricket</name>
    <dbReference type="NCBI Taxonomy" id="6999"/>
</organismHost>
<organismHost>
    <name type="scientific">Gryllus campestris</name>
    <dbReference type="NCBI Taxonomy" id="58607"/>
</organismHost>
<organismHost>
    <name type="scientific">Spodoptera frugiperda</name>
    <name type="common">Fall armyworm</name>
    <dbReference type="NCBI Taxonomy" id="7108"/>
</organismHost>
<proteinExistence type="inferred from homology"/>
<feature type="chain" id="PRO_0000378030" description="Uncharacterized protein 219L">
    <location>
        <begin position="1"/>
        <end position="343"/>
    </location>
</feature>
<gene>
    <name type="ORF">IIV6-219L</name>
</gene>
<evidence type="ECO:0000305" key="1"/>
<comment type="similarity">
    <text evidence="1">Belongs to the IIV-6 219L family.</text>
</comment>
<name>VF219_IIV6</name>